<proteinExistence type="inferred from homology"/>
<sequence>MTSVAEGLFKSLPKPKYTGEDEEVPQHAQPRGPRIVGADQIDQSQIVLRRTGPPPYGNRAGWRPRAAEDFGDGGAFPEILVAQYPLDMGRKGTATTSNALAVQVDAEGKVKYDAIARRGHSENRIVHASFKDLIPLRQRVDMGEISLDRPSEEEVQAQMEKTKNALASLVEGAVAAQKPKNVKGGRRAEPTFVRYTPANQMGDTTRKNDRIMKIVERQQDPMEPPKFKHKKIPRGPPSPPPPIMHSPPRKLTAEDQEAWRIPPPVSNWKNPKGYTVPLDKRLAADGRGLQDVTINDKFAQFAEALFTADRHAREEVRLRAQMQQKLAEKEKAQKEEHLRALAQKAREERAASNRRDSRARSHTRSASRSPSAYSRSATPSDDEEAARERERIRRERRQDAERQLRQSRMGTERRIQMMAREQNRDISEKVALGLAKPTQTSESMWDSRLFNQTSGLQSGFNEDNPYDKPLFAAQDAINSIYRPRAQLDVDDEEGAEGEMSKIQKTNRFEVLGKAKEGFRGAAEAEARDGPVQFEKDTTDPFGIDSMIADVTGGAGQKRYGIQEVEREDRGSKRARVDDD</sequence>
<comment type="function">
    <text evidence="1">Involved in pre-mRNA splicing.</text>
</comment>
<comment type="subunit">
    <text evidence="1">Associated with the spliceosome.</text>
</comment>
<comment type="subcellular location">
    <subcellularLocation>
        <location evidence="1">Nucleus</location>
    </subcellularLocation>
</comment>
<comment type="similarity">
    <text evidence="3">Belongs to the SNW family.</text>
</comment>
<name>PRP45_ASPFU</name>
<feature type="chain" id="PRO_0000084815" description="Pre-mRNA-processing protein 45">
    <location>
        <begin position="1"/>
        <end position="579"/>
    </location>
</feature>
<feature type="region of interest" description="Disordered" evidence="2">
    <location>
        <begin position="1"/>
        <end position="64"/>
    </location>
</feature>
<feature type="region of interest" description="Disordered" evidence="2">
    <location>
        <begin position="218"/>
        <end position="254"/>
    </location>
</feature>
<feature type="region of interest" description="Disordered" evidence="2">
    <location>
        <begin position="343"/>
        <end position="414"/>
    </location>
</feature>
<feature type="region of interest" description="Disordered" evidence="2">
    <location>
        <begin position="521"/>
        <end position="579"/>
    </location>
</feature>
<feature type="compositionally biased region" description="Pro residues" evidence="2">
    <location>
        <begin position="234"/>
        <end position="245"/>
    </location>
</feature>
<feature type="compositionally biased region" description="Basic and acidic residues" evidence="2">
    <location>
        <begin position="343"/>
        <end position="359"/>
    </location>
</feature>
<feature type="compositionally biased region" description="Low complexity" evidence="2">
    <location>
        <begin position="366"/>
        <end position="379"/>
    </location>
</feature>
<feature type="compositionally biased region" description="Basic and acidic residues" evidence="2">
    <location>
        <begin position="386"/>
        <end position="414"/>
    </location>
</feature>
<feature type="compositionally biased region" description="Basic and acidic residues" evidence="2">
    <location>
        <begin position="521"/>
        <end position="538"/>
    </location>
</feature>
<feature type="compositionally biased region" description="Basic and acidic residues" evidence="2">
    <location>
        <begin position="563"/>
        <end position="579"/>
    </location>
</feature>
<evidence type="ECO:0000250" key="1"/>
<evidence type="ECO:0000256" key="2">
    <source>
        <dbReference type="SAM" id="MobiDB-lite"/>
    </source>
</evidence>
<evidence type="ECO:0000305" key="3"/>
<gene>
    <name type="primary">prp45</name>
    <name type="ORF">AFUA_5G03050</name>
</gene>
<reference key="1">
    <citation type="journal article" date="2005" name="Nature">
        <title>Genomic sequence of the pathogenic and allergenic filamentous fungus Aspergillus fumigatus.</title>
        <authorList>
            <person name="Nierman W.C."/>
            <person name="Pain A."/>
            <person name="Anderson M.J."/>
            <person name="Wortman J.R."/>
            <person name="Kim H.S."/>
            <person name="Arroyo J."/>
            <person name="Berriman M."/>
            <person name="Abe K."/>
            <person name="Archer D.B."/>
            <person name="Bermejo C."/>
            <person name="Bennett J.W."/>
            <person name="Bowyer P."/>
            <person name="Chen D."/>
            <person name="Collins M."/>
            <person name="Coulsen R."/>
            <person name="Davies R."/>
            <person name="Dyer P.S."/>
            <person name="Farman M.L."/>
            <person name="Fedorova N."/>
            <person name="Fedorova N.D."/>
            <person name="Feldblyum T.V."/>
            <person name="Fischer R."/>
            <person name="Fosker N."/>
            <person name="Fraser A."/>
            <person name="Garcia J.L."/>
            <person name="Garcia M.J."/>
            <person name="Goble A."/>
            <person name="Goldman G.H."/>
            <person name="Gomi K."/>
            <person name="Griffith-Jones S."/>
            <person name="Gwilliam R."/>
            <person name="Haas B.J."/>
            <person name="Haas H."/>
            <person name="Harris D.E."/>
            <person name="Horiuchi H."/>
            <person name="Huang J."/>
            <person name="Humphray S."/>
            <person name="Jimenez J."/>
            <person name="Keller N."/>
            <person name="Khouri H."/>
            <person name="Kitamoto K."/>
            <person name="Kobayashi T."/>
            <person name="Konzack S."/>
            <person name="Kulkarni R."/>
            <person name="Kumagai T."/>
            <person name="Lafton A."/>
            <person name="Latge J.-P."/>
            <person name="Li W."/>
            <person name="Lord A."/>
            <person name="Lu C."/>
            <person name="Majoros W.H."/>
            <person name="May G.S."/>
            <person name="Miller B.L."/>
            <person name="Mohamoud Y."/>
            <person name="Molina M."/>
            <person name="Monod M."/>
            <person name="Mouyna I."/>
            <person name="Mulligan S."/>
            <person name="Murphy L.D."/>
            <person name="O'Neil S."/>
            <person name="Paulsen I."/>
            <person name="Penalva M.A."/>
            <person name="Pertea M."/>
            <person name="Price C."/>
            <person name="Pritchard B.L."/>
            <person name="Quail M.A."/>
            <person name="Rabbinowitsch E."/>
            <person name="Rawlins N."/>
            <person name="Rajandream M.A."/>
            <person name="Reichard U."/>
            <person name="Renauld H."/>
            <person name="Robson G.D."/>
            <person name="Rodriguez de Cordoba S."/>
            <person name="Rodriguez-Pena J.M."/>
            <person name="Ronning C.M."/>
            <person name="Rutter S."/>
            <person name="Salzberg S.L."/>
            <person name="Sanchez M."/>
            <person name="Sanchez-Ferrero J.C."/>
            <person name="Saunders D."/>
            <person name="Seeger K."/>
            <person name="Squares R."/>
            <person name="Squares S."/>
            <person name="Takeuchi M."/>
            <person name="Tekaia F."/>
            <person name="Turner G."/>
            <person name="Vazquez de Aldana C.R."/>
            <person name="Weidman J."/>
            <person name="White O."/>
            <person name="Woodward J.R."/>
            <person name="Yu J.-H."/>
            <person name="Fraser C.M."/>
            <person name="Galagan J.E."/>
            <person name="Asai K."/>
            <person name="Machida M."/>
            <person name="Hall N."/>
            <person name="Barrell B.G."/>
            <person name="Denning D.W."/>
        </authorList>
    </citation>
    <scope>NUCLEOTIDE SEQUENCE [LARGE SCALE GENOMIC DNA]</scope>
    <source>
        <strain>ATCC MYA-4609 / CBS 101355 / FGSC A1100 / Af293</strain>
    </source>
</reference>
<accession>Q4WEH7</accession>
<protein>
    <recommendedName>
        <fullName>Pre-mRNA-processing protein 45</fullName>
    </recommendedName>
</protein>
<organism>
    <name type="scientific">Aspergillus fumigatus (strain ATCC MYA-4609 / CBS 101355 / FGSC A1100 / Af293)</name>
    <name type="common">Neosartorya fumigata</name>
    <dbReference type="NCBI Taxonomy" id="330879"/>
    <lineage>
        <taxon>Eukaryota</taxon>
        <taxon>Fungi</taxon>
        <taxon>Dikarya</taxon>
        <taxon>Ascomycota</taxon>
        <taxon>Pezizomycotina</taxon>
        <taxon>Eurotiomycetes</taxon>
        <taxon>Eurotiomycetidae</taxon>
        <taxon>Eurotiales</taxon>
        <taxon>Aspergillaceae</taxon>
        <taxon>Aspergillus</taxon>
        <taxon>Aspergillus subgen. Fumigati</taxon>
    </lineage>
</organism>
<keyword id="KW-0507">mRNA processing</keyword>
<keyword id="KW-0508">mRNA splicing</keyword>
<keyword id="KW-0539">Nucleus</keyword>
<keyword id="KW-1185">Reference proteome</keyword>
<keyword id="KW-0747">Spliceosome</keyword>
<dbReference type="EMBL" id="AAHF01000011">
    <property type="protein sequence ID" value="EAL86000.1"/>
    <property type="molecule type" value="Genomic_DNA"/>
</dbReference>
<dbReference type="RefSeq" id="XP_748038.1">
    <property type="nucleotide sequence ID" value="XM_742945.1"/>
</dbReference>
<dbReference type="SMR" id="Q4WEH7"/>
<dbReference type="FunCoup" id="Q4WEH7">
    <property type="interactions" value="948"/>
</dbReference>
<dbReference type="STRING" id="330879.Q4WEH7"/>
<dbReference type="EnsemblFungi" id="EAL86000">
    <property type="protein sequence ID" value="EAL86000"/>
    <property type="gene ID" value="AFUA_5G03050"/>
</dbReference>
<dbReference type="GeneID" id="3505594"/>
<dbReference type="KEGG" id="afm:AFUA_5G03050"/>
<dbReference type="VEuPathDB" id="FungiDB:Afu5g03050"/>
<dbReference type="eggNOG" id="KOG2441">
    <property type="taxonomic scope" value="Eukaryota"/>
</dbReference>
<dbReference type="HOGENOM" id="CLU_006601_2_0_1"/>
<dbReference type="InParanoid" id="Q4WEH7"/>
<dbReference type="OMA" id="YGQRRGW"/>
<dbReference type="OrthoDB" id="666364at2759"/>
<dbReference type="Proteomes" id="UP000002530">
    <property type="component" value="Chromosome 5"/>
</dbReference>
<dbReference type="GO" id="GO:0071014">
    <property type="term" value="C:post-mRNA release spliceosomal complex"/>
    <property type="evidence" value="ECO:0007669"/>
    <property type="project" value="EnsemblFungi"/>
</dbReference>
<dbReference type="GO" id="GO:0000974">
    <property type="term" value="C:Prp19 complex"/>
    <property type="evidence" value="ECO:0007669"/>
    <property type="project" value="EnsemblFungi"/>
</dbReference>
<dbReference type="GO" id="GO:0060090">
    <property type="term" value="F:molecular adaptor activity"/>
    <property type="evidence" value="ECO:0007669"/>
    <property type="project" value="EnsemblFungi"/>
</dbReference>
<dbReference type="GO" id="GO:0003723">
    <property type="term" value="F:RNA binding"/>
    <property type="evidence" value="ECO:0007669"/>
    <property type="project" value="EnsemblFungi"/>
</dbReference>
<dbReference type="GO" id="GO:0000398">
    <property type="term" value="P:mRNA splicing, via spliceosome"/>
    <property type="evidence" value="ECO:0007669"/>
    <property type="project" value="InterPro"/>
</dbReference>
<dbReference type="InterPro" id="IPR017862">
    <property type="entry name" value="SKI-int_prot_SKIP"/>
</dbReference>
<dbReference type="InterPro" id="IPR004015">
    <property type="entry name" value="SKI-int_prot_SKIP_SNW-dom"/>
</dbReference>
<dbReference type="PANTHER" id="PTHR12096">
    <property type="entry name" value="NUCLEAR PROTEIN SKIP-RELATED"/>
    <property type="match status" value="1"/>
</dbReference>
<dbReference type="Pfam" id="PF02731">
    <property type="entry name" value="SKIP_SNW"/>
    <property type="match status" value="1"/>
</dbReference>